<proteinExistence type="inferred from homology"/>
<sequence>MSNIYANSYLIIFVFLCLGVLLPIGALTAGRWLRPHVPSDAKATTYESGNNPFHDSRVQFQVRYYLFALLFVIFDIETVFLYPWAVVYDQLGLFALVEMIIFIVLLAIGLIYAWKKKVLRWM</sequence>
<name>NUOA_GEOKA</name>
<protein>
    <recommendedName>
        <fullName evidence="1">NADH-quinone oxidoreductase subunit A</fullName>
        <ecNumber evidence="1">7.1.1.-</ecNumber>
    </recommendedName>
    <alternativeName>
        <fullName evidence="1">NADH dehydrogenase I subunit A</fullName>
    </alternativeName>
    <alternativeName>
        <fullName evidence="1">NDH-1 subunit A</fullName>
    </alternativeName>
    <alternativeName>
        <fullName evidence="1">NUO1</fullName>
    </alternativeName>
</protein>
<organism>
    <name type="scientific">Geobacillus kaustophilus (strain HTA426)</name>
    <dbReference type="NCBI Taxonomy" id="235909"/>
    <lineage>
        <taxon>Bacteria</taxon>
        <taxon>Bacillati</taxon>
        <taxon>Bacillota</taxon>
        <taxon>Bacilli</taxon>
        <taxon>Bacillales</taxon>
        <taxon>Anoxybacillaceae</taxon>
        <taxon>Geobacillus</taxon>
        <taxon>Geobacillus thermoleovorans group</taxon>
    </lineage>
</organism>
<dbReference type="EC" id="7.1.1.-" evidence="1"/>
<dbReference type="EMBL" id="BA000043">
    <property type="protein sequence ID" value="BAD77641.1"/>
    <property type="molecule type" value="Genomic_DNA"/>
</dbReference>
<dbReference type="RefSeq" id="WP_011232823.1">
    <property type="nucleotide sequence ID" value="NC_006510.1"/>
</dbReference>
<dbReference type="SMR" id="Q5KUJ5"/>
<dbReference type="STRING" id="235909.GK3356"/>
<dbReference type="KEGG" id="gka:GK3356"/>
<dbReference type="eggNOG" id="COG0838">
    <property type="taxonomic scope" value="Bacteria"/>
</dbReference>
<dbReference type="HOGENOM" id="CLU_119549_1_1_9"/>
<dbReference type="Proteomes" id="UP000001172">
    <property type="component" value="Chromosome"/>
</dbReference>
<dbReference type="GO" id="GO:0030964">
    <property type="term" value="C:NADH dehydrogenase complex"/>
    <property type="evidence" value="ECO:0007669"/>
    <property type="project" value="TreeGrafter"/>
</dbReference>
<dbReference type="GO" id="GO:0005886">
    <property type="term" value="C:plasma membrane"/>
    <property type="evidence" value="ECO:0007669"/>
    <property type="project" value="UniProtKB-SubCell"/>
</dbReference>
<dbReference type="GO" id="GO:0008137">
    <property type="term" value="F:NADH dehydrogenase (ubiquinone) activity"/>
    <property type="evidence" value="ECO:0007669"/>
    <property type="project" value="InterPro"/>
</dbReference>
<dbReference type="GO" id="GO:0050136">
    <property type="term" value="F:NADH:ubiquinone reductase (non-electrogenic) activity"/>
    <property type="evidence" value="ECO:0007669"/>
    <property type="project" value="UniProtKB-UniRule"/>
</dbReference>
<dbReference type="GO" id="GO:0048038">
    <property type="term" value="F:quinone binding"/>
    <property type="evidence" value="ECO:0007669"/>
    <property type="project" value="UniProtKB-KW"/>
</dbReference>
<dbReference type="Gene3D" id="1.20.58.1610">
    <property type="entry name" value="NADH:ubiquinone/plastoquinone oxidoreductase, chain 3"/>
    <property type="match status" value="1"/>
</dbReference>
<dbReference type="HAMAP" id="MF_01394">
    <property type="entry name" value="NDH1_NuoA"/>
    <property type="match status" value="1"/>
</dbReference>
<dbReference type="InterPro" id="IPR023043">
    <property type="entry name" value="NAD(P)H_OxRDtase_bac/plastid"/>
</dbReference>
<dbReference type="InterPro" id="IPR000440">
    <property type="entry name" value="NADH_UbQ/plastoQ_OxRdtase_su3"/>
</dbReference>
<dbReference type="InterPro" id="IPR038430">
    <property type="entry name" value="NDAH_ubi_oxred_su3_sf"/>
</dbReference>
<dbReference type="NCBIfam" id="NF005839">
    <property type="entry name" value="PRK07756.1"/>
    <property type="match status" value="1"/>
</dbReference>
<dbReference type="PANTHER" id="PTHR11058">
    <property type="entry name" value="NADH-UBIQUINONE OXIDOREDUCTASE CHAIN 3"/>
    <property type="match status" value="1"/>
</dbReference>
<dbReference type="PANTHER" id="PTHR11058:SF9">
    <property type="entry name" value="NADH-UBIQUINONE OXIDOREDUCTASE CHAIN 3"/>
    <property type="match status" value="1"/>
</dbReference>
<dbReference type="Pfam" id="PF00507">
    <property type="entry name" value="Oxidored_q4"/>
    <property type="match status" value="1"/>
</dbReference>
<accession>Q5KUJ5</accession>
<reference key="1">
    <citation type="journal article" date="2004" name="Nucleic Acids Res.">
        <title>Thermoadaptation trait revealed by the genome sequence of thermophilic Geobacillus kaustophilus.</title>
        <authorList>
            <person name="Takami H."/>
            <person name="Takaki Y."/>
            <person name="Chee G.-J."/>
            <person name="Nishi S."/>
            <person name="Shimamura S."/>
            <person name="Suzuki H."/>
            <person name="Matsui S."/>
            <person name="Uchiyama I."/>
        </authorList>
    </citation>
    <scope>NUCLEOTIDE SEQUENCE [LARGE SCALE GENOMIC DNA]</scope>
    <source>
        <strain>HTA426</strain>
    </source>
</reference>
<gene>
    <name evidence="1" type="primary">nuoA</name>
    <name type="ordered locus">GK3356</name>
</gene>
<evidence type="ECO:0000255" key="1">
    <source>
        <dbReference type="HAMAP-Rule" id="MF_01394"/>
    </source>
</evidence>
<feature type="chain" id="PRO_0000362687" description="NADH-quinone oxidoreductase subunit A">
    <location>
        <begin position="1"/>
        <end position="122"/>
    </location>
</feature>
<feature type="transmembrane region" description="Helical" evidence="1">
    <location>
        <begin position="10"/>
        <end position="30"/>
    </location>
</feature>
<feature type="transmembrane region" description="Helical" evidence="1">
    <location>
        <begin position="67"/>
        <end position="87"/>
    </location>
</feature>
<feature type="transmembrane region" description="Helical" evidence="1">
    <location>
        <begin position="91"/>
        <end position="111"/>
    </location>
</feature>
<comment type="function">
    <text evidence="1">NDH-1 shuttles electrons from NADH, via FMN and iron-sulfur (Fe-S) centers, to quinones in the respiratory chain. The immediate electron acceptor for the enzyme in this species is believed to be a menaquinone. Couples the redox reaction to proton translocation (for every two electrons transferred, four hydrogen ions are translocated across the cytoplasmic membrane), and thus conserves the redox energy in a proton gradient.</text>
</comment>
<comment type="catalytic activity">
    <reaction evidence="1">
        <text>a quinone + NADH + 5 H(+)(in) = a quinol + NAD(+) + 4 H(+)(out)</text>
        <dbReference type="Rhea" id="RHEA:57888"/>
        <dbReference type="ChEBI" id="CHEBI:15378"/>
        <dbReference type="ChEBI" id="CHEBI:24646"/>
        <dbReference type="ChEBI" id="CHEBI:57540"/>
        <dbReference type="ChEBI" id="CHEBI:57945"/>
        <dbReference type="ChEBI" id="CHEBI:132124"/>
    </reaction>
</comment>
<comment type="subunit">
    <text evidence="1">NDH-1 is composed of 14 different subunits. Subunits NuoA, H, J, K, L, M, N constitute the membrane sector of the complex.</text>
</comment>
<comment type="subcellular location">
    <subcellularLocation>
        <location evidence="1">Cell membrane</location>
        <topology evidence="1">Multi-pass membrane protein</topology>
    </subcellularLocation>
</comment>
<comment type="similarity">
    <text evidence="1">Belongs to the complex I subunit 3 family.</text>
</comment>
<keyword id="KW-1003">Cell membrane</keyword>
<keyword id="KW-0472">Membrane</keyword>
<keyword id="KW-0520">NAD</keyword>
<keyword id="KW-0874">Quinone</keyword>
<keyword id="KW-1185">Reference proteome</keyword>
<keyword id="KW-1278">Translocase</keyword>
<keyword id="KW-0812">Transmembrane</keyword>
<keyword id="KW-1133">Transmembrane helix</keyword>
<keyword id="KW-0813">Transport</keyword>